<gene>
    <name evidence="1" type="primary">lpxC</name>
    <name type="ordered locus">XAC0785</name>
</gene>
<protein>
    <recommendedName>
        <fullName evidence="1">UDP-3-O-acyl-N-acetylglucosamine deacetylase</fullName>
        <shortName evidence="1">UDP-3-O-acyl-GlcNAc deacetylase</shortName>
        <ecNumber evidence="1">3.5.1.108</ecNumber>
    </recommendedName>
    <alternativeName>
        <fullName evidence="1">UDP-3-O-[R-3-hydroxymyristoyl]-N-acetylglucosamine deacetylase</fullName>
    </alternativeName>
</protein>
<proteinExistence type="inferred from homology"/>
<evidence type="ECO:0000255" key="1">
    <source>
        <dbReference type="HAMAP-Rule" id="MF_00388"/>
    </source>
</evidence>
<evidence type="ECO:0000305" key="2"/>
<dbReference type="EC" id="3.5.1.108" evidence="1"/>
<dbReference type="EMBL" id="AE008923">
    <property type="protein sequence ID" value="AAM35673.1"/>
    <property type="status" value="ALT_INIT"/>
    <property type="molecule type" value="Genomic_DNA"/>
</dbReference>
<dbReference type="RefSeq" id="WP_003485269.1">
    <property type="nucleotide sequence ID" value="NC_003919.1"/>
</dbReference>
<dbReference type="SMR" id="Q8PPA3"/>
<dbReference type="GeneID" id="66909979"/>
<dbReference type="KEGG" id="xac:XAC0785"/>
<dbReference type="eggNOG" id="COG0774">
    <property type="taxonomic scope" value="Bacteria"/>
</dbReference>
<dbReference type="HOGENOM" id="CLU_046528_1_0_6"/>
<dbReference type="UniPathway" id="UPA00359">
    <property type="reaction ID" value="UER00478"/>
</dbReference>
<dbReference type="Proteomes" id="UP000000576">
    <property type="component" value="Chromosome"/>
</dbReference>
<dbReference type="GO" id="GO:0016020">
    <property type="term" value="C:membrane"/>
    <property type="evidence" value="ECO:0007669"/>
    <property type="project" value="GOC"/>
</dbReference>
<dbReference type="GO" id="GO:0046872">
    <property type="term" value="F:metal ion binding"/>
    <property type="evidence" value="ECO:0007669"/>
    <property type="project" value="UniProtKB-KW"/>
</dbReference>
<dbReference type="GO" id="GO:0103117">
    <property type="term" value="F:UDP-3-O-acyl-N-acetylglucosamine deacetylase activity"/>
    <property type="evidence" value="ECO:0007669"/>
    <property type="project" value="UniProtKB-UniRule"/>
</dbReference>
<dbReference type="GO" id="GO:0009245">
    <property type="term" value="P:lipid A biosynthetic process"/>
    <property type="evidence" value="ECO:0007669"/>
    <property type="project" value="UniProtKB-UniRule"/>
</dbReference>
<dbReference type="Gene3D" id="3.30.230.20">
    <property type="entry name" value="lpxc deacetylase, domain 1"/>
    <property type="match status" value="1"/>
</dbReference>
<dbReference type="Gene3D" id="3.30.1700.10">
    <property type="entry name" value="lpxc deacetylase, domain 2"/>
    <property type="match status" value="1"/>
</dbReference>
<dbReference type="HAMAP" id="MF_00388">
    <property type="entry name" value="LpxC"/>
    <property type="match status" value="1"/>
</dbReference>
<dbReference type="InterPro" id="IPR020568">
    <property type="entry name" value="Ribosomal_Su5_D2-typ_SF"/>
</dbReference>
<dbReference type="InterPro" id="IPR004463">
    <property type="entry name" value="UDP-acyl_GlcNac_deAcase"/>
</dbReference>
<dbReference type="InterPro" id="IPR011334">
    <property type="entry name" value="UDP-acyl_GlcNac_deAcase_C"/>
</dbReference>
<dbReference type="InterPro" id="IPR015870">
    <property type="entry name" value="UDP-acyl_N-AcGlcN_deAcase_N"/>
</dbReference>
<dbReference type="NCBIfam" id="TIGR00325">
    <property type="entry name" value="lpxC"/>
    <property type="match status" value="1"/>
</dbReference>
<dbReference type="PANTHER" id="PTHR33694">
    <property type="entry name" value="UDP-3-O-ACYL-N-ACETYLGLUCOSAMINE DEACETYLASE 1, MITOCHONDRIAL-RELATED"/>
    <property type="match status" value="1"/>
</dbReference>
<dbReference type="PANTHER" id="PTHR33694:SF1">
    <property type="entry name" value="UDP-3-O-ACYL-N-ACETYLGLUCOSAMINE DEACETYLASE 1, MITOCHONDRIAL-RELATED"/>
    <property type="match status" value="1"/>
</dbReference>
<dbReference type="Pfam" id="PF03331">
    <property type="entry name" value="LpxC"/>
    <property type="match status" value="1"/>
</dbReference>
<dbReference type="SUPFAM" id="SSF54211">
    <property type="entry name" value="Ribosomal protein S5 domain 2-like"/>
    <property type="match status" value="2"/>
</dbReference>
<accession>Q8PPA3</accession>
<sequence>MTQQRTLKNTIRATGVGLHSGDKVYMTLRPAPVDHGVVFRRVDLEPVVEVPADAELVTETTLCTGLTCNGAKIQTVEHLMSALAGLGVDNVIVELSSAELPIMDGSSGPFVFLLQSAGIVEQSKPKRFIRITQTVEVRDGDKVARFEPYEGYKLGFTIEFNHPMIPAKQSRQEIEFSTSAYVKEISRARTFGFMRDLEYMRERNLGLGGSMDNAIVLDEFRVLNEDGLRYTNEFVRHKILDAIGDLYLAGGAILGAYEGFKSGHALNNKLVRALLADQAAWEWVSFPEGTEQPPVTYASPVYA</sequence>
<name>LPXC_XANAC</name>
<comment type="function">
    <text evidence="1">Catalyzes the hydrolysis of UDP-3-O-myristoyl-N-acetylglucosamine to form UDP-3-O-myristoylglucosamine and acetate, the committed step in lipid A biosynthesis.</text>
</comment>
<comment type="catalytic activity">
    <reaction evidence="1">
        <text>a UDP-3-O-[(3R)-3-hydroxyacyl]-N-acetyl-alpha-D-glucosamine + H2O = a UDP-3-O-[(3R)-3-hydroxyacyl]-alpha-D-glucosamine + acetate</text>
        <dbReference type="Rhea" id="RHEA:67816"/>
        <dbReference type="ChEBI" id="CHEBI:15377"/>
        <dbReference type="ChEBI" id="CHEBI:30089"/>
        <dbReference type="ChEBI" id="CHEBI:137740"/>
        <dbReference type="ChEBI" id="CHEBI:173225"/>
        <dbReference type="EC" id="3.5.1.108"/>
    </reaction>
</comment>
<comment type="cofactor">
    <cofactor evidence="1">
        <name>Zn(2+)</name>
        <dbReference type="ChEBI" id="CHEBI:29105"/>
    </cofactor>
</comment>
<comment type="pathway">
    <text evidence="1">Glycolipid biosynthesis; lipid IV(A) biosynthesis; lipid IV(A) from (3R)-3-hydroxytetradecanoyl-[acyl-carrier-protein] and UDP-N-acetyl-alpha-D-glucosamine: step 2/6.</text>
</comment>
<comment type="similarity">
    <text evidence="1">Belongs to the LpxC family.</text>
</comment>
<comment type="sequence caution" evidence="2">
    <conflict type="erroneous initiation">
        <sequence resource="EMBL-CDS" id="AAM35673"/>
    </conflict>
</comment>
<feature type="chain" id="PRO_0000191966" description="UDP-3-O-acyl-N-acetylglucosamine deacetylase">
    <location>
        <begin position="1"/>
        <end position="303"/>
    </location>
</feature>
<feature type="active site" description="Proton donor" evidence="1">
    <location>
        <position position="264"/>
    </location>
</feature>
<feature type="binding site" evidence="1">
    <location>
        <position position="78"/>
    </location>
    <ligand>
        <name>Zn(2+)</name>
        <dbReference type="ChEBI" id="CHEBI:29105"/>
    </ligand>
</feature>
<feature type="binding site" evidence="1">
    <location>
        <position position="237"/>
    </location>
    <ligand>
        <name>Zn(2+)</name>
        <dbReference type="ChEBI" id="CHEBI:29105"/>
    </ligand>
</feature>
<feature type="binding site" evidence="1">
    <location>
        <position position="241"/>
    </location>
    <ligand>
        <name>Zn(2+)</name>
        <dbReference type="ChEBI" id="CHEBI:29105"/>
    </ligand>
</feature>
<keyword id="KW-0378">Hydrolase</keyword>
<keyword id="KW-0441">Lipid A biosynthesis</keyword>
<keyword id="KW-0444">Lipid biosynthesis</keyword>
<keyword id="KW-0443">Lipid metabolism</keyword>
<keyword id="KW-0479">Metal-binding</keyword>
<keyword id="KW-0862">Zinc</keyword>
<organism>
    <name type="scientific">Xanthomonas axonopodis pv. citri (strain 306)</name>
    <dbReference type="NCBI Taxonomy" id="190486"/>
    <lineage>
        <taxon>Bacteria</taxon>
        <taxon>Pseudomonadati</taxon>
        <taxon>Pseudomonadota</taxon>
        <taxon>Gammaproteobacteria</taxon>
        <taxon>Lysobacterales</taxon>
        <taxon>Lysobacteraceae</taxon>
        <taxon>Xanthomonas</taxon>
    </lineage>
</organism>
<reference key="1">
    <citation type="journal article" date="2002" name="Nature">
        <title>Comparison of the genomes of two Xanthomonas pathogens with differing host specificities.</title>
        <authorList>
            <person name="da Silva A.C.R."/>
            <person name="Ferro J.A."/>
            <person name="Reinach F.C."/>
            <person name="Farah C.S."/>
            <person name="Furlan L.R."/>
            <person name="Quaggio R.B."/>
            <person name="Monteiro-Vitorello C.B."/>
            <person name="Van Sluys M.A."/>
            <person name="Almeida N.F. Jr."/>
            <person name="Alves L.M.C."/>
            <person name="do Amaral A.M."/>
            <person name="Bertolini M.C."/>
            <person name="Camargo L.E.A."/>
            <person name="Camarotte G."/>
            <person name="Cannavan F."/>
            <person name="Cardozo J."/>
            <person name="Chambergo F."/>
            <person name="Ciapina L.P."/>
            <person name="Cicarelli R.M.B."/>
            <person name="Coutinho L.L."/>
            <person name="Cursino-Santos J.R."/>
            <person name="El-Dorry H."/>
            <person name="Faria J.B."/>
            <person name="Ferreira A.J.S."/>
            <person name="Ferreira R.C.C."/>
            <person name="Ferro M.I.T."/>
            <person name="Formighieri E.F."/>
            <person name="Franco M.C."/>
            <person name="Greggio C.C."/>
            <person name="Gruber A."/>
            <person name="Katsuyama A.M."/>
            <person name="Kishi L.T."/>
            <person name="Leite R.P."/>
            <person name="Lemos E.G.M."/>
            <person name="Lemos M.V.F."/>
            <person name="Locali E.C."/>
            <person name="Machado M.A."/>
            <person name="Madeira A.M.B.N."/>
            <person name="Martinez-Rossi N.M."/>
            <person name="Martins E.C."/>
            <person name="Meidanis J."/>
            <person name="Menck C.F.M."/>
            <person name="Miyaki C.Y."/>
            <person name="Moon D.H."/>
            <person name="Moreira L.M."/>
            <person name="Novo M.T.M."/>
            <person name="Okura V.K."/>
            <person name="Oliveira M.C."/>
            <person name="Oliveira V.R."/>
            <person name="Pereira H.A."/>
            <person name="Rossi A."/>
            <person name="Sena J.A.D."/>
            <person name="Silva C."/>
            <person name="de Souza R.F."/>
            <person name="Spinola L.A.F."/>
            <person name="Takita M.A."/>
            <person name="Tamura R.E."/>
            <person name="Teixeira E.C."/>
            <person name="Tezza R.I.D."/>
            <person name="Trindade dos Santos M."/>
            <person name="Truffi D."/>
            <person name="Tsai S.M."/>
            <person name="White F.F."/>
            <person name="Setubal J.C."/>
            <person name="Kitajima J.P."/>
        </authorList>
    </citation>
    <scope>NUCLEOTIDE SEQUENCE [LARGE SCALE GENOMIC DNA]</scope>
    <source>
        <strain>306</strain>
    </source>
</reference>